<name>OAT2_STAAN</name>
<keyword id="KW-0028">Amino-acid biosynthesis</keyword>
<keyword id="KW-0032">Aminotransferase</keyword>
<keyword id="KW-0963">Cytoplasm</keyword>
<keyword id="KW-0641">Proline biosynthesis</keyword>
<keyword id="KW-0663">Pyridoxal phosphate</keyword>
<keyword id="KW-0808">Transferase</keyword>
<sequence>MTKSEKIIELTNHYGAHNYLPLPIVISEAEGVWVKDPEGNKYMDMLSAYSAVNQGHRHPKIIQALKDQADKVTLVSRAFHSDNLGEWYEKICKLAGKDKALPMNTGAEAVETALKAARRWAYDVKGIEPNKAEIIAFNGNFHGRTMAPVSLSSEAEYQRGYGPLLDGFRKVDFGDVDALKAAINENTAAVLVEPIQGEAGINIPPEGYLKAIRELCDEHNVLFIADEIQAGLGRSGKLFATDWDNVKPDVYILGKALGGGVFPISVVLADKEVLDVFTPGSHGSTFGGNPLACAASIAALDVIVDEDLPGRSLELGDYFKEQLKQIDHPSIKEVRGRGLFIGVELNESARPYCEALKEEGLLCKETHDTVIRFAPPLIITKEELDLALEKIRHVFQ</sequence>
<dbReference type="EC" id="2.6.1.13" evidence="1"/>
<dbReference type="EMBL" id="BA000018">
    <property type="protein sequence ID" value="BAB42057.1"/>
    <property type="molecule type" value="Genomic_DNA"/>
</dbReference>
<dbReference type="PIR" id="F89862">
    <property type="entry name" value="F89862"/>
</dbReference>
<dbReference type="RefSeq" id="WP_000167314.1">
    <property type="nucleotide sequence ID" value="NC_002745.2"/>
</dbReference>
<dbReference type="SMR" id="P60298"/>
<dbReference type="EnsemblBacteria" id="BAB42057">
    <property type="protein sequence ID" value="BAB42057"/>
    <property type="gene ID" value="BAB42057"/>
</dbReference>
<dbReference type="KEGG" id="sau:SA0818"/>
<dbReference type="HOGENOM" id="CLU_016922_10_1_9"/>
<dbReference type="UniPathway" id="UPA00098">
    <property type="reaction ID" value="UER00358"/>
</dbReference>
<dbReference type="GO" id="GO:0005737">
    <property type="term" value="C:cytoplasm"/>
    <property type="evidence" value="ECO:0007669"/>
    <property type="project" value="UniProtKB-SubCell"/>
</dbReference>
<dbReference type="GO" id="GO:0042802">
    <property type="term" value="F:identical protein binding"/>
    <property type="evidence" value="ECO:0007669"/>
    <property type="project" value="TreeGrafter"/>
</dbReference>
<dbReference type="GO" id="GO:0004587">
    <property type="term" value="F:ornithine aminotransferase activity"/>
    <property type="evidence" value="ECO:0007669"/>
    <property type="project" value="UniProtKB-UniRule"/>
</dbReference>
<dbReference type="GO" id="GO:0030170">
    <property type="term" value="F:pyridoxal phosphate binding"/>
    <property type="evidence" value="ECO:0007669"/>
    <property type="project" value="UniProtKB-UniRule"/>
</dbReference>
<dbReference type="GO" id="GO:0055129">
    <property type="term" value="P:L-proline biosynthetic process"/>
    <property type="evidence" value="ECO:0007669"/>
    <property type="project" value="UniProtKB-UniRule"/>
</dbReference>
<dbReference type="CDD" id="cd00610">
    <property type="entry name" value="OAT_like"/>
    <property type="match status" value="1"/>
</dbReference>
<dbReference type="FunFam" id="3.40.640.10:FF:000011">
    <property type="entry name" value="Ornithine aminotransferase"/>
    <property type="match status" value="1"/>
</dbReference>
<dbReference type="Gene3D" id="3.90.1150.10">
    <property type="entry name" value="Aspartate Aminotransferase, domain 1"/>
    <property type="match status" value="1"/>
</dbReference>
<dbReference type="Gene3D" id="3.40.640.10">
    <property type="entry name" value="Type I PLP-dependent aspartate aminotransferase-like (Major domain)"/>
    <property type="match status" value="1"/>
</dbReference>
<dbReference type="HAMAP" id="MF_01689">
    <property type="entry name" value="Ornith_aminotrans_3"/>
    <property type="match status" value="1"/>
</dbReference>
<dbReference type="InterPro" id="IPR005814">
    <property type="entry name" value="Aminotrans_3"/>
</dbReference>
<dbReference type="InterPro" id="IPR049704">
    <property type="entry name" value="Aminotrans_3_PPA_site"/>
</dbReference>
<dbReference type="InterPro" id="IPR050103">
    <property type="entry name" value="Class-III_PLP-dep_AT"/>
</dbReference>
<dbReference type="InterPro" id="IPR010164">
    <property type="entry name" value="Orn_aminotrans"/>
</dbReference>
<dbReference type="InterPro" id="IPR034757">
    <property type="entry name" value="Ornith_aminotrans_bact"/>
</dbReference>
<dbReference type="InterPro" id="IPR015424">
    <property type="entry name" value="PyrdxlP-dep_Trfase"/>
</dbReference>
<dbReference type="InterPro" id="IPR015421">
    <property type="entry name" value="PyrdxlP-dep_Trfase_major"/>
</dbReference>
<dbReference type="InterPro" id="IPR015422">
    <property type="entry name" value="PyrdxlP-dep_Trfase_small"/>
</dbReference>
<dbReference type="NCBIfam" id="TIGR01885">
    <property type="entry name" value="Orn_aminotrans"/>
    <property type="match status" value="1"/>
</dbReference>
<dbReference type="NCBIfam" id="NF002325">
    <property type="entry name" value="PRK01278.1"/>
    <property type="match status" value="1"/>
</dbReference>
<dbReference type="NCBIfam" id="NF003145">
    <property type="entry name" value="PRK04073.1"/>
    <property type="match status" value="1"/>
</dbReference>
<dbReference type="PANTHER" id="PTHR11986">
    <property type="entry name" value="AMINOTRANSFERASE CLASS III"/>
    <property type="match status" value="1"/>
</dbReference>
<dbReference type="PANTHER" id="PTHR11986:SF18">
    <property type="entry name" value="ORNITHINE AMINOTRANSFERASE, MITOCHONDRIAL"/>
    <property type="match status" value="1"/>
</dbReference>
<dbReference type="Pfam" id="PF00202">
    <property type="entry name" value="Aminotran_3"/>
    <property type="match status" value="1"/>
</dbReference>
<dbReference type="PIRSF" id="PIRSF000521">
    <property type="entry name" value="Transaminase_4ab_Lys_Orn"/>
    <property type="match status" value="1"/>
</dbReference>
<dbReference type="SUPFAM" id="SSF53383">
    <property type="entry name" value="PLP-dependent transferases"/>
    <property type="match status" value="1"/>
</dbReference>
<dbReference type="PROSITE" id="PS00600">
    <property type="entry name" value="AA_TRANSFER_CLASS_3"/>
    <property type="match status" value="1"/>
</dbReference>
<proteinExistence type="evidence at protein level"/>
<accession>P60298</accession>
<accession>Q99VD1</accession>
<gene>
    <name evidence="1" type="primary">rocD2</name>
    <name type="ordered locus">SA0818</name>
</gene>
<organism>
    <name type="scientific">Staphylococcus aureus (strain N315)</name>
    <dbReference type="NCBI Taxonomy" id="158879"/>
    <lineage>
        <taxon>Bacteria</taxon>
        <taxon>Bacillati</taxon>
        <taxon>Bacillota</taxon>
        <taxon>Bacilli</taxon>
        <taxon>Bacillales</taxon>
        <taxon>Staphylococcaceae</taxon>
        <taxon>Staphylococcus</taxon>
    </lineage>
</organism>
<reference key="1">
    <citation type="journal article" date="2001" name="Lancet">
        <title>Whole genome sequencing of meticillin-resistant Staphylococcus aureus.</title>
        <authorList>
            <person name="Kuroda M."/>
            <person name="Ohta T."/>
            <person name="Uchiyama I."/>
            <person name="Baba T."/>
            <person name="Yuzawa H."/>
            <person name="Kobayashi I."/>
            <person name="Cui L."/>
            <person name="Oguchi A."/>
            <person name="Aoki K."/>
            <person name="Nagai Y."/>
            <person name="Lian J.-Q."/>
            <person name="Ito T."/>
            <person name="Kanamori M."/>
            <person name="Matsumaru H."/>
            <person name="Maruyama A."/>
            <person name="Murakami H."/>
            <person name="Hosoyama A."/>
            <person name="Mizutani-Ui Y."/>
            <person name="Takahashi N.K."/>
            <person name="Sawano T."/>
            <person name="Inoue R."/>
            <person name="Kaito C."/>
            <person name="Sekimizu K."/>
            <person name="Hirakawa H."/>
            <person name="Kuhara S."/>
            <person name="Goto S."/>
            <person name="Yabuzaki J."/>
            <person name="Kanehisa M."/>
            <person name="Yamashita A."/>
            <person name="Oshima K."/>
            <person name="Furuya K."/>
            <person name="Yoshino C."/>
            <person name="Shiba T."/>
            <person name="Hattori M."/>
            <person name="Ogasawara N."/>
            <person name="Hayashi H."/>
            <person name="Hiramatsu K."/>
        </authorList>
    </citation>
    <scope>NUCLEOTIDE SEQUENCE [LARGE SCALE GENOMIC DNA]</scope>
    <source>
        <strain>N315</strain>
    </source>
</reference>
<reference key="2">
    <citation type="journal article" date="2005" name="J. Microbiol. Methods">
        <title>Correlation of proteomic and transcriptomic profiles of Staphylococcus aureus during the post-exponential phase of growth.</title>
        <authorList>
            <person name="Scherl A."/>
            <person name="Francois P."/>
            <person name="Bento M."/>
            <person name="Deshusses J.M."/>
            <person name="Charbonnier Y."/>
            <person name="Converset V."/>
            <person name="Huyghe A."/>
            <person name="Walter N."/>
            <person name="Hoogland C."/>
            <person name="Appel R.D."/>
            <person name="Sanchez J.-C."/>
            <person name="Zimmermann-Ivol C.G."/>
            <person name="Corthals G.L."/>
            <person name="Hochstrasser D.F."/>
            <person name="Schrenzel J."/>
        </authorList>
    </citation>
    <scope>IDENTIFICATION BY MASS SPECTROMETRY</scope>
    <source>
        <strain>N315</strain>
    </source>
</reference>
<reference key="3">
    <citation type="submission" date="2007-10" db="UniProtKB">
        <title>Shotgun proteomic analysis of total and membrane protein extracts of S. aureus strain N315.</title>
        <authorList>
            <person name="Vaezzadeh A.R."/>
            <person name="Deshusses J."/>
            <person name="Lescuyer P."/>
            <person name="Hochstrasser D.F."/>
        </authorList>
    </citation>
    <scope>IDENTIFICATION BY MASS SPECTROMETRY [LARGE SCALE ANALYSIS]</scope>
    <source>
        <strain>N315</strain>
    </source>
</reference>
<protein>
    <recommendedName>
        <fullName evidence="1">Ornithine aminotransferase 2</fullName>
        <shortName evidence="1">OAT 2</shortName>
        <ecNumber evidence="1">2.6.1.13</ecNumber>
    </recommendedName>
    <alternativeName>
        <fullName evidence="1">Ornithine--oxo-acid aminotransferase 2</fullName>
    </alternativeName>
</protein>
<comment type="function">
    <text evidence="1">Catalyzes the interconversion of ornithine to glutamate semialdehyde.</text>
</comment>
<comment type="catalytic activity">
    <reaction evidence="1">
        <text>a 2-oxocarboxylate + L-ornithine = L-glutamate 5-semialdehyde + an L-alpha-amino acid</text>
        <dbReference type="Rhea" id="RHEA:13877"/>
        <dbReference type="ChEBI" id="CHEBI:35179"/>
        <dbReference type="ChEBI" id="CHEBI:46911"/>
        <dbReference type="ChEBI" id="CHEBI:58066"/>
        <dbReference type="ChEBI" id="CHEBI:59869"/>
        <dbReference type="EC" id="2.6.1.13"/>
    </reaction>
</comment>
<comment type="cofactor">
    <cofactor evidence="2">
        <name>pyridoxal 5'-phosphate</name>
        <dbReference type="ChEBI" id="CHEBI:597326"/>
    </cofactor>
</comment>
<comment type="pathway">
    <text evidence="1">Amino-acid biosynthesis; L-proline biosynthesis; L-glutamate 5-semialdehyde from L-ornithine: step 1/1.</text>
</comment>
<comment type="subcellular location">
    <subcellularLocation>
        <location evidence="1">Cytoplasm</location>
    </subcellularLocation>
</comment>
<comment type="similarity">
    <text evidence="1">Belongs to the class-III pyridoxal-phosphate-dependent aminotransferase family. OAT subfamily.</text>
</comment>
<evidence type="ECO:0000255" key="1">
    <source>
        <dbReference type="HAMAP-Rule" id="MF_01689"/>
    </source>
</evidence>
<evidence type="ECO:0000305" key="2"/>
<feature type="chain" id="PRO_0000112785" description="Ornithine aminotransferase 2">
    <location>
        <begin position="1"/>
        <end position="396"/>
    </location>
</feature>
<feature type="modified residue" description="N6-(pyridoxal phosphate)lysine" evidence="1">
    <location>
        <position position="255"/>
    </location>
</feature>